<gene>
    <name type="primary">tlcA</name>
    <name type="synonym">tlc1</name>
    <name type="ordered locus">RBE_1355</name>
</gene>
<sequence>MSTTKSDNYISELRKVIWPIERYENKKFLPMAFMMFCILLNYSTLRSIKDGFVVTDIGAEAISFLKTYIVLPSAVIAMIVYVKLCDILKQENVFYVITSFFLAYFALFAFVLYPNPDLVHPNPEAIESLSLAYPNFKWFIRIVGKWSFASFYTMAELWGTLMLSLLFWQFANQITKTDEAKRFYSMFGLLANLALPVTSLIIGYFLHEKTQIVAEHLKFTPLFVIMIISSLAVILTYRWMNKNVLTDPKLYDPALVKGKKAKAKMSLIESFKMIFTSKYVGYIALLLIAYGISVNLVEGVWKSKLKELHPTKEAYTMYMGQFQAYQGWVAIAFMIIGSNILRKVSWLTAAMITPLMMLITGIAFFAFIFFDSVIAMYLTGILASGPLALAVMIGTIQNVLSKGVKYSLFDATKNMAYIPLDKDLRVKGQAAVEVIGGRFGKSGGAIIQSTFFIIFPALGFVEATPYFASIFFVIVILWIYAVKGLNKEYQVLVNNTEK</sequence>
<evidence type="ECO:0000250" key="1"/>
<evidence type="ECO:0000255" key="2"/>
<evidence type="ECO:0000305" key="3"/>
<reference key="1">
    <citation type="journal article" date="2006" name="PLoS Genet.">
        <title>Genome sequence of Rickettsia bellii illuminates the role of amoebae in gene exchanges between intracellular pathogens.</title>
        <authorList>
            <person name="Ogata H."/>
            <person name="La Scola B."/>
            <person name="Audic S."/>
            <person name="Renesto P."/>
            <person name="Blanc G."/>
            <person name="Robert C."/>
            <person name="Fournier P.-E."/>
            <person name="Claverie J.-M."/>
            <person name="Raoult D."/>
        </authorList>
    </citation>
    <scope>NUCLEOTIDE SEQUENCE [LARGE SCALE GENOMIC DNA]</scope>
    <source>
        <strain>RML369-C</strain>
    </source>
</reference>
<protein>
    <recommendedName>
        <fullName>ADP,ATP carrier protein 1</fullName>
    </recommendedName>
    <alternativeName>
        <fullName>ADP/ATP translocase 1</fullName>
    </alternativeName>
</protein>
<dbReference type="EMBL" id="CP000087">
    <property type="protein sequence ID" value="ABE05436.1"/>
    <property type="molecule type" value="Genomic_DNA"/>
</dbReference>
<dbReference type="RefSeq" id="WP_011478005.1">
    <property type="nucleotide sequence ID" value="NC_007940.1"/>
</dbReference>
<dbReference type="KEGG" id="rbe:RBE_1355"/>
<dbReference type="eggNOG" id="COG3202">
    <property type="taxonomic scope" value="Bacteria"/>
</dbReference>
<dbReference type="HOGENOM" id="CLU_023964_0_1_5"/>
<dbReference type="OrthoDB" id="19786at2"/>
<dbReference type="Proteomes" id="UP000001951">
    <property type="component" value="Chromosome"/>
</dbReference>
<dbReference type="GO" id="GO:0005886">
    <property type="term" value="C:plasma membrane"/>
    <property type="evidence" value="ECO:0007669"/>
    <property type="project" value="UniProtKB-SubCell"/>
</dbReference>
<dbReference type="GO" id="GO:0005524">
    <property type="term" value="F:ATP binding"/>
    <property type="evidence" value="ECO:0007669"/>
    <property type="project" value="UniProtKB-KW"/>
</dbReference>
<dbReference type="GO" id="GO:0005471">
    <property type="term" value="F:ATP:ADP antiporter activity"/>
    <property type="evidence" value="ECO:0007669"/>
    <property type="project" value="InterPro"/>
</dbReference>
<dbReference type="InterPro" id="IPR004667">
    <property type="entry name" value="ADP_ATP_car_bac_type"/>
</dbReference>
<dbReference type="InterPro" id="IPR036259">
    <property type="entry name" value="MFS_trans_sf"/>
</dbReference>
<dbReference type="NCBIfam" id="TIGR00769">
    <property type="entry name" value="AAA"/>
    <property type="match status" value="1"/>
</dbReference>
<dbReference type="PANTHER" id="PTHR31187">
    <property type="match status" value="1"/>
</dbReference>
<dbReference type="PANTHER" id="PTHR31187:SF1">
    <property type="entry name" value="ADP,ATP CARRIER PROTEIN 1"/>
    <property type="match status" value="1"/>
</dbReference>
<dbReference type="Pfam" id="PF03219">
    <property type="entry name" value="TLC"/>
    <property type="match status" value="1"/>
</dbReference>
<dbReference type="SUPFAM" id="SSF103473">
    <property type="entry name" value="MFS general substrate transporter"/>
    <property type="match status" value="1"/>
</dbReference>
<organism>
    <name type="scientific">Rickettsia bellii (strain RML369-C)</name>
    <dbReference type="NCBI Taxonomy" id="336407"/>
    <lineage>
        <taxon>Bacteria</taxon>
        <taxon>Pseudomonadati</taxon>
        <taxon>Pseudomonadota</taxon>
        <taxon>Alphaproteobacteria</taxon>
        <taxon>Rickettsiales</taxon>
        <taxon>Rickettsiaceae</taxon>
        <taxon>Rickettsieae</taxon>
        <taxon>Rickettsia</taxon>
        <taxon>belli group</taxon>
    </lineage>
</organism>
<proteinExistence type="inferred from homology"/>
<accession>Q1RGS8</accession>
<name>TLCA_RICBR</name>
<keyword id="KW-0067">ATP-binding</keyword>
<keyword id="KW-1003">Cell membrane</keyword>
<keyword id="KW-1015">Disulfide bond</keyword>
<keyword id="KW-0472">Membrane</keyword>
<keyword id="KW-0547">Nucleotide-binding</keyword>
<keyword id="KW-0812">Transmembrane</keyword>
<keyword id="KW-1133">Transmembrane helix</keyword>
<keyword id="KW-0813">Transport</keyword>
<comment type="function">
    <text evidence="1">Provides the rickettsial cell with host ATP in exchange for rickettsial ADP. This is an obligate exchange system. This energy acquiring activity is an important component of rickettsial parasitism (By similarity).</text>
</comment>
<comment type="subcellular location">
    <subcellularLocation>
        <location>Cell membrane</location>
        <topology>Multi-pass membrane protein</topology>
    </subcellularLocation>
</comment>
<comment type="similarity">
    <text evidence="3">Belongs to the ADP/ATP translocase tlc family.</text>
</comment>
<feature type="chain" id="PRO_0000286481" description="ADP,ATP carrier protein 1">
    <location>
        <begin position="1"/>
        <end position="498"/>
    </location>
</feature>
<feature type="topological domain" description="Cytoplasmic" evidence="3">
    <location>
        <begin position="1"/>
        <end position="33"/>
    </location>
</feature>
<feature type="transmembrane region" description="Helical" evidence="3">
    <location>
        <begin position="34"/>
        <end position="54"/>
    </location>
</feature>
<feature type="topological domain" description="Extracellular" evidence="3">
    <location>
        <begin position="55"/>
        <end position="67"/>
    </location>
</feature>
<feature type="transmembrane region" description="Helical" evidence="3">
    <location>
        <begin position="68"/>
        <end position="88"/>
    </location>
</feature>
<feature type="topological domain" description="Cytoplasmic" evidence="3">
    <location>
        <begin position="89"/>
        <end position="92"/>
    </location>
</feature>
<feature type="transmembrane region" description="Helical" evidence="3">
    <location>
        <begin position="93"/>
        <end position="113"/>
    </location>
</feature>
<feature type="topological domain" description="Extracellular" evidence="3">
    <location>
        <begin position="114"/>
        <end position="147"/>
    </location>
</feature>
<feature type="transmembrane region" description="Helical" evidence="3">
    <location>
        <begin position="148"/>
        <end position="168"/>
    </location>
</feature>
<feature type="topological domain" description="Cytoplasmic" evidence="3">
    <location>
        <begin position="169"/>
        <end position="184"/>
    </location>
</feature>
<feature type="transmembrane region" description="Helical" evidence="3">
    <location>
        <begin position="185"/>
        <end position="205"/>
    </location>
</feature>
<feature type="topological domain" description="Extracellular" evidence="3">
    <location>
        <begin position="206"/>
        <end position="218"/>
    </location>
</feature>
<feature type="transmembrane region" description="Helical" evidence="3">
    <location>
        <begin position="219"/>
        <end position="239"/>
    </location>
</feature>
<feature type="topological domain" description="Cytoplasmic" evidence="3">
    <location>
        <begin position="240"/>
        <end position="279"/>
    </location>
</feature>
<feature type="transmembrane region" description="Helical" evidence="3">
    <location>
        <begin position="280"/>
        <end position="300"/>
    </location>
</feature>
<feature type="topological domain" description="Extracellular" evidence="3">
    <location>
        <begin position="301"/>
        <end position="320"/>
    </location>
</feature>
<feature type="transmembrane region" description="Helical" evidence="3">
    <location>
        <begin position="321"/>
        <end position="341"/>
    </location>
</feature>
<feature type="topological domain" description="Cytoplasmic" evidence="3">
    <location>
        <begin position="342"/>
        <end position="348"/>
    </location>
</feature>
<feature type="transmembrane region" description="Helical" evidence="3">
    <location>
        <begin position="349"/>
        <end position="369"/>
    </location>
</feature>
<feature type="topological domain" description="Extracellular" evidence="3">
    <location>
        <begin position="370"/>
        <end position="379"/>
    </location>
</feature>
<feature type="transmembrane region" description="Helical" evidence="3">
    <location>
        <begin position="380"/>
        <end position="400"/>
    </location>
</feature>
<feature type="topological domain" description="Cytoplasmic" evidence="3">
    <location>
        <begin position="401"/>
        <end position="438"/>
    </location>
</feature>
<feature type="transmembrane region" description="Helical" evidence="3">
    <location>
        <begin position="439"/>
        <end position="459"/>
    </location>
</feature>
<feature type="topological domain" description="Extracellular" evidence="3">
    <location>
        <begin position="460"/>
        <end position="465"/>
    </location>
</feature>
<feature type="transmembrane region" description="Helical" evidence="3">
    <location>
        <begin position="466"/>
        <end position="486"/>
    </location>
</feature>
<feature type="topological domain" description="Cytoplasmic" evidence="3">
    <location>
        <begin position="487"/>
        <end position="498"/>
    </location>
</feature>
<feature type="binding site" evidence="2">
    <location>
        <begin position="436"/>
        <end position="442"/>
    </location>
    <ligand>
        <name>ATP</name>
        <dbReference type="ChEBI" id="CHEBI:30616"/>
    </ligand>
</feature>
<feature type="disulfide bond" evidence="3">
    <location>
        <begin position="37"/>
        <end position="85"/>
    </location>
</feature>